<evidence type="ECO:0000250" key="1"/>
<evidence type="ECO:0000255" key="2"/>
<evidence type="ECO:0000305" key="3"/>
<gene>
    <name type="primary">NRM</name>
</gene>
<keyword id="KW-0472">Membrane</keyword>
<keyword id="KW-0539">Nucleus</keyword>
<keyword id="KW-1185">Reference proteome</keyword>
<keyword id="KW-0812">Transmembrane</keyword>
<keyword id="KW-1133">Transmembrane helix</keyword>
<sequence length="262" mass="29322">MAPALLLVPAALASFILAFGTGVEFVRFTSLRPLLGGIPESGGPDARQGWLAALQDQSILVPLAWDLGLLLLFVGQHSLMATETVKAWMSRYFGVLQRSLYVACTALALQLVMRYWEPVPRGPVLWEAQAEPWATWVPLLCFVLHVISWLLIFSILLVFDYAELMGLKQVYYHVLGLGEPLALKSPRALRLFSHLRHPVCVELLTVLWVVPTLGTDRLLLALLLTLYLGLAHGLDQQDLRYLRAQLQRKLHLLSRPQDGEAE</sequence>
<proteinExistence type="inferred from homology"/>
<name>NRM_PIG</name>
<feature type="chain" id="PRO_0000299399" description="Nurim">
    <location>
        <begin position="1"/>
        <end position="262"/>
    </location>
</feature>
<feature type="topological domain" description="Nuclear" evidence="2">
    <location>
        <begin position="1"/>
        <end position="4"/>
    </location>
</feature>
<feature type="transmembrane region" description="Helical" evidence="2">
    <location>
        <begin position="5"/>
        <end position="28"/>
    </location>
</feature>
<feature type="topological domain" description="Perinuclear space" evidence="2">
    <location>
        <begin position="29"/>
        <end position="58"/>
    </location>
</feature>
<feature type="transmembrane region" description="Helical" evidence="2">
    <location>
        <begin position="59"/>
        <end position="80"/>
    </location>
</feature>
<feature type="topological domain" description="Nuclear" evidence="2">
    <location>
        <begin position="81"/>
        <end position="97"/>
    </location>
</feature>
<feature type="transmembrane region" description="Helical" evidence="2">
    <location>
        <begin position="98"/>
        <end position="114"/>
    </location>
</feature>
<feature type="topological domain" description="Perinuclear space" evidence="2">
    <location>
        <begin position="115"/>
        <end position="133"/>
    </location>
</feature>
<feature type="transmembrane region" description="Helical" evidence="2">
    <location>
        <begin position="134"/>
        <end position="164"/>
    </location>
</feature>
<feature type="topological domain" description="Nuclear" evidence="2">
    <location>
        <begin position="165"/>
        <end position="191"/>
    </location>
</feature>
<feature type="transmembrane region" description="Helical" evidence="2">
    <location>
        <begin position="192"/>
        <end position="210"/>
    </location>
</feature>
<feature type="topological domain" description="Perinuclear space" evidence="2">
    <location>
        <begin position="211"/>
        <end position="216"/>
    </location>
</feature>
<feature type="transmembrane region" description="Helical" evidence="2">
    <location>
        <begin position="217"/>
        <end position="234"/>
    </location>
</feature>
<feature type="topological domain" description="Nuclear" evidence="2">
    <location>
        <begin position="235"/>
        <end position="262"/>
    </location>
</feature>
<comment type="subcellular location">
    <subcellularLocation>
        <location evidence="1">Nucleus inner membrane</location>
        <topology evidence="1">Multi-pass membrane protein</topology>
    </subcellularLocation>
</comment>
<comment type="similarity">
    <text evidence="3">Belongs to the nurim family.</text>
</comment>
<comment type="sequence caution" evidence="3">
    <conflict type="erroneous gene model prediction">
        <sequence resource="EMBL-CDS" id="BAD08444"/>
    </conflict>
</comment>
<organism>
    <name type="scientific">Sus scrofa</name>
    <name type="common">Pig</name>
    <dbReference type="NCBI Taxonomy" id="9823"/>
    <lineage>
        <taxon>Eukaryota</taxon>
        <taxon>Metazoa</taxon>
        <taxon>Chordata</taxon>
        <taxon>Craniata</taxon>
        <taxon>Vertebrata</taxon>
        <taxon>Euteleostomi</taxon>
        <taxon>Mammalia</taxon>
        <taxon>Eutheria</taxon>
        <taxon>Laurasiatheria</taxon>
        <taxon>Artiodactyla</taxon>
        <taxon>Suina</taxon>
        <taxon>Suidae</taxon>
        <taxon>Sus</taxon>
    </lineage>
</organism>
<reference key="1">
    <citation type="submission" date="2003-06" db="EMBL/GenBank/DDBJ databases">
        <authorList>
            <consortium name="Porcine genome sequencing project"/>
        </authorList>
    </citation>
    <scope>NUCLEOTIDE SEQUENCE [LARGE SCALE GENOMIC DNA]</scope>
</reference>
<accession>Q767L9</accession>
<accession>Q767K5</accession>
<dbReference type="EMBL" id="AB113356">
    <property type="protein sequence ID" value="BAD08433.1"/>
    <property type="molecule type" value="Genomic_DNA"/>
</dbReference>
<dbReference type="EMBL" id="AB113357">
    <property type="protein sequence ID" value="BAD08444.1"/>
    <property type="status" value="ALT_SEQ"/>
    <property type="molecule type" value="Genomic_DNA"/>
</dbReference>
<dbReference type="RefSeq" id="NP_001116623.1">
    <property type="nucleotide sequence ID" value="NM_001123151.1"/>
</dbReference>
<dbReference type="FunCoup" id="Q767L9">
    <property type="interactions" value="645"/>
</dbReference>
<dbReference type="STRING" id="9823.ENSSSCP00000027557"/>
<dbReference type="PaxDb" id="9823-ENSSSCP00000027557"/>
<dbReference type="Ensembl" id="ENSSSCT00000043250.3">
    <property type="protein sequence ID" value="ENSSSCP00000051593.2"/>
    <property type="gene ID" value="ENSSSCG00000023639.5"/>
</dbReference>
<dbReference type="Ensembl" id="ENSSSCT00015032939.1">
    <property type="protein sequence ID" value="ENSSSCP00015013085.1"/>
    <property type="gene ID" value="ENSSSCG00015024606.1"/>
</dbReference>
<dbReference type="Ensembl" id="ENSSSCT00070049163.1">
    <property type="protein sequence ID" value="ENSSSCP00070041520.1"/>
    <property type="gene ID" value="ENSSSCG00070024635.1"/>
</dbReference>
<dbReference type="Ensembl" id="ENSSSCT00085022730">
    <property type="protein sequence ID" value="ENSSSCP00085015653"/>
    <property type="gene ID" value="ENSSSCG00085012105"/>
</dbReference>
<dbReference type="Ensembl" id="ENSSSCT00090030756">
    <property type="protein sequence ID" value="ENSSSCP00090019140"/>
    <property type="gene ID" value="ENSSSCG00090017404"/>
</dbReference>
<dbReference type="Ensembl" id="ENSSSCT00105043355">
    <property type="protein sequence ID" value="ENSSSCP00105030227"/>
    <property type="gene ID" value="ENSSSCG00105022782"/>
</dbReference>
<dbReference type="Ensembl" id="ENSSSCT00110040585">
    <property type="protein sequence ID" value="ENSSSCP00110028326"/>
    <property type="gene ID" value="ENSSSCG00110021013"/>
</dbReference>
<dbReference type="Ensembl" id="ENSSSCT00115013460">
    <property type="protein sequence ID" value="ENSSSCP00115012718"/>
    <property type="gene ID" value="ENSSSCG00115007703"/>
</dbReference>
<dbReference type="GeneID" id="100144454"/>
<dbReference type="KEGG" id="ssc:100144454"/>
<dbReference type="CTD" id="11270"/>
<dbReference type="VGNC" id="VGNC:90899">
    <property type="gene designation" value="NRM"/>
</dbReference>
<dbReference type="eggNOG" id="ENOG502RS62">
    <property type="taxonomic scope" value="Eukaryota"/>
</dbReference>
<dbReference type="GeneTree" id="ENSGT00390000008146"/>
<dbReference type="HOGENOM" id="CLU_083708_1_0_1"/>
<dbReference type="InParanoid" id="Q767L9"/>
<dbReference type="OMA" id="WSIWFPL"/>
<dbReference type="OrthoDB" id="10050858at2759"/>
<dbReference type="TreeFam" id="TF324853"/>
<dbReference type="Proteomes" id="UP000008227">
    <property type="component" value="Chromosome 7"/>
</dbReference>
<dbReference type="Proteomes" id="UP000314985">
    <property type="component" value="Chromosome 7"/>
</dbReference>
<dbReference type="Proteomes" id="UP000694570">
    <property type="component" value="Unplaced"/>
</dbReference>
<dbReference type="Proteomes" id="UP000694571">
    <property type="component" value="Unplaced"/>
</dbReference>
<dbReference type="Proteomes" id="UP000694720">
    <property type="component" value="Unplaced"/>
</dbReference>
<dbReference type="Proteomes" id="UP000694722">
    <property type="component" value="Unplaced"/>
</dbReference>
<dbReference type="Proteomes" id="UP000694723">
    <property type="component" value="Unplaced"/>
</dbReference>
<dbReference type="Proteomes" id="UP000694724">
    <property type="component" value="Unplaced"/>
</dbReference>
<dbReference type="Proteomes" id="UP000694725">
    <property type="component" value="Unplaced"/>
</dbReference>
<dbReference type="Proteomes" id="UP000694726">
    <property type="component" value="Unplaced"/>
</dbReference>
<dbReference type="Proteomes" id="UP000694727">
    <property type="component" value="Unplaced"/>
</dbReference>
<dbReference type="Proteomes" id="UP000694728">
    <property type="component" value="Unplaced"/>
</dbReference>
<dbReference type="GO" id="GO:0005635">
    <property type="term" value="C:nuclear envelope"/>
    <property type="evidence" value="ECO:0000250"/>
    <property type="project" value="UniProtKB"/>
</dbReference>
<dbReference type="GO" id="GO:0005637">
    <property type="term" value="C:nuclear inner membrane"/>
    <property type="evidence" value="ECO:0007669"/>
    <property type="project" value="UniProtKB-SubCell"/>
</dbReference>
<dbReference type="InterPro" id="IPR033580">
    <property type="entry name" value="Nurim-like"/>
</dbReference>
<dbReference type="PANTHER" id="PTHR31040">
    <property type="entry name" value="NURIM"/>
    <property type="match status" value="1"/>
</dbReference>
<dbReference type="PANTHER" id="PTHR31040:SF1">
    <property type="entry name" value="NURIM"/>
    <property type="match status" value="1"/>
</dbReference>
<protein>
    <recommendedName>
        <fullName>Nurim</fullName>
    </recommendedName>
    <alternativeName>
        <fullName>Nuclear envelope membrane protein</fullName>
    </alternativeName>
    <alternativeName>
        <fullName>Nuclear rim protein</fullName>
    </alternativeName>
</protein>